<comment type="function">
    <text evidence="1">No terpene synthase activity detected in vitro.</text>
</comment>
<comment type="miscellaneous">
    <text>Selaginella moellendorffii contains two distinct types of functional terpene synthases (TPS) genes, the typical seed plants TPS genes (SmTPSs) and a microbial type TPS genes (SmMTPSLs).</text>
</comment>
<comment type="similarity">
    <text evidence="2">Belongs to the terpene synthase family.</text>
</comment>
<organism>
    <name type="scientific">Selaginella moellendorffii</name>
    <name type="common">Spikemoss</name>
    <dbReference type="NCBI Taxonomy" id="88036"/>
    <lineage>
        <taxon>Eukaryota</taxon>
        <taxon>Viridiplantae</taxon>
        <taxon>Streptophyta</taxon>
        <taxon>Embryophyta</taxon>
        <taxon>Tracheophyta</taxon>
        <taxon>Lycopodiopsida</taxon>
        <taxon>Selaginellales</taxon>
        <taxon>Selaginellaceae</taxon>
        <taxon>Selaginella</taxon>
    </lineage>
</organism>
<sequence length="358" mass="40322">MRSFSSFHISPMKCKPALRVHPLCDKLQMEMDRWCVDFASPESSDEEMRSFIAQKLPFLSCMLFPTALNSRIPWLIKFVCWFTLFDSLVDDVKSLGANARDASAFVGKYLETIHGAKGAMAPVGGSLLSCFASLWQHFREDMPPRQYSRLVRHVLGLFQQSASQSRLRQEGAVLTASEFVAGKRMFSSGATLVLLMEYGLGVELDEEVLEQPAIRDIATTAIDHLICVNDILSFRVEYLSGDFSNLLSSICMSQGVGLQEAADQTLELMEDCNRRFVELHDLITRSSYFSTAVEGYIDGLGYMMSGNLEWSWLTARYHGVDWVAPNLKMRQGVMYLEEPPRFEPTMPLEAYISSSDSC</sequence>
<proteinExistence type="evidence at transcript level"/>
<evidence type="ECO:0000269" key="1">
    <source>
    </source>
</evidence>
<evidence type="ECO:0000305" key="2"/>
<feature type="chain" id="PRO_0000421941" description="Microbial Terpene synthase-like protein 13">
    <location>
        <begin position="1"/>
        <end position="358"/>
    </location>
</feature>
<feature type="sequence conflict" description="In Ref. 1; AFR34008." evidence="2" ref="1">
    <original>S</original>
    <variation>P</variation>
    <location>
        <position position="233"/>
    </location>
</feature>
<protein>
    <recommendedName>
        <fullName>Microbial Terpene synthase-like protein 13</fullName>
        <shortName>SmMTPSL13</shortName>
    </recommendedName>
</protein>
<gene>
    <name type="ORF">SELMODRAFT_412537</name>
</gene>
<accession>J9R393</accession>
<accession>D8RLT0</accession>
<reference key="1">
    <citation type="journal article" date="2012" name="Proc. Natl. Acad. Sci. U.S.A.">
        <title>Nonseed plant Selaginella moellendorfii has both seed plant and microbial types of terpene synthases.</title>
        <authorList>
            <person name="Li G."/>
            <person name="Kollner T.G."/>
            <person name="Yin Y."/>
            <person name="Jiang Y."/>
            <person name="Chen H."/>
            <person name="Xu Y."/>
            <person name="Gershenzon J."/>
            <person name="Pichersky E."/>
            <person name="Chen F."/>
        </authorList>
    </citation>
    <scope>NUCLEOTIDE SEQUENCE [MRNA]</scope>
    <scope>FUNCTION</scope>
    <scope>GENE FAMILY</scope>
    <scope>NOMENCLATURE</scope>
</reference>
<reference key="2">
    <citation type="journal article" date="2011" name="Science">
        <title>The Selaginella genome identifies genetic changes associated with the evolution of vascular plants.</title>
        <authorList>
            <person name="Banks J.A."/>
            <person name="Nishiyama T."/>
            <person name="Hasebe M."/>
            <person name="Bowman J.L."/>
            <person name="Gribskov M."/>
            <person name="dePamphilis C."/>
            <person name="Albert V.A."/>
            <person name="Aono N."/>
            <person name="Aoyama T."/>
            <person name="Ambrose B.A."/>
            <person name="Ashton N.W."/>
            <person name="Axtell M.J."/>
            <person name="Barker E."/>
            <person name="Barker M.S."/>
            <person name="Bennetzen J.L."/>
            <person name="Bonawitz N.D."/>
            <person name="Chapple C."/>
            <person name="Cheng C."/>
            <person name="Correa L.G."/>
            <person name="Dacre M."/>
            <person name="DeBarry J."/>
            <person name="Dreyer I."/>
            <person name="Elias M."/>
            <person name="Engstrom E.M."/>
            <person name="Estelle M."/>
            <person name="Feng L."/>
            <person name="Finet C."/>
            <person name="Floyd S.K."/>
            <person name="Frommer W.B."/>
            <person name="Fujita T."/>
            <person name="Gramzow L."/>
            <person name="Gutensohn M."/>
            <person name="Harholt J."/>
            <person name="Hattori M."/>
            <person name="Heyl A."/>
            <person name="Hirai T."/>
            <person name="Hiwatashi Y."/>
            <person name="Ishikawa M."/>
            <person name="Iwata M."/>
            <person name="Karol K.G."/>
            <person name="Koehler B."/>
            <person name="Kolukisaoglu U."/>
            <person name="Kubo M."/>
            <person name="Kurata T."/>
            <person name="Lalonde S."/>
            <person name="Li K."/>
            <person name="Li Y."/>
            <person name="Litt A."/>
            <person name="Lyons E."/>
            <person name="Manning G."/>
            <person name="Maruyama T."/>
            <person name="Michael T.P."/>
            <person name="Mikami K."/>
            <person name="Miyazaki S."/>
            <person name="Morinaga S."/>
            <person name="Murata T."/>
            <person name="Mueller-Roeber B."/>
            <person name="Nelson D.R."/>
            <person name="Obara M."/>
            <person name="Oguri Y."/>
            <person name="Olmstead R.G."/>
            <person name="Onodera N."/>
            <person name="Petersen B.L."/>
            <person name="Pils B."/>
            <person name="Prigge M."/>
            <person name="Rensing S.A."/>
            <person name="Riano-Pachon D.M."/>
            <person name="Roberts A.W."/>
            <person name="Sato Y."/>
            <person name="Scheller H.V."/>
            <person name="Schulz B."/>
            <person name="Schulz C."/>
            <person name="Shakirov E.V."/>
            <person name="Shibagaki N."/>
            <person name="Shinohara N."/>
            <person name="Shippen D.E."/>
            <person name="Soerensen I."/>
            <person name="Sotooka R."/>
            <person name="Sugimoto N."/>
            <person name="Sugita M."/>
            <person name="Sumikawa N."/>
            <person name="Tanurdzic M."/>
            <person name="Theissen G."/>
            <person name="Ulvskov P."/>
            <person name="Wakazuki S."/>
            <person name="Weng J.K."/>
            <person name="Willats W.W."/>
            <person name="Wipf D."/>
            <person name="Wolf P.G."/>
            <person name="Yang L."/>
            <person name="Zimmer A.D."/>
            <person name="Zhu Q."/>
            <person name="Mitros T."/>
            <person name="Hellsten U."/>
            <person name="Loque D."/>
            <person name="Otillar R."/>
            <person name="Salamov A."/>
            <person name="Schmutz J."/>
            <person name="Shapiro H."/>
            <person name="Lindquist E."/>
            <person name="Lucas S."/>
            <person name="Rokhsar D."/>
            <person name="Grigoriev I.V."/>
        </authorList>
    </citation>
    <scope>NUCLEOTIDE SEQUENCE [LARGE SCALE GENOMIC DNA]</scope>
</reference>
<dbReference type="EMBL" id="JX413788">
    <property type="protein sequence ID" value="AFR34008.1"/>
    <property type="molecule type" value="mRNA"/>
</dbReference>
<dbReference type="EMBL" id="GL377583">
    <property type="protein sequence ID" value="EFJ26774.1"/>
    <property type="molecule type" value="Genomic_DNA"/>
</dbReference>
<dbReference type="SMR" id="J9R393"/>
<dbReference type="EnsemblPlants" id="EFJ26774">
    <property type="protein sequence ID" value="EFJ26774"/>
    <property type="gene ID" value="SELMODRAFT_412537"/>
</dbReference>
<dbReference type="Gramene" id="EFJ26774">
    <property type="protein sequence ID" value="EFJ26774"/>
    <property type="gene ID" value="SELMODRAFT_412537"/>
</dbReference>
<dbReference type="KEGG" id="smo:SELMODRAFT_412537"/>
<dbReference type="eggNOG" id="ENOG502SH7W">
    <property type="taxonomic scope" value="Eukaryota"/>
</dbReference>
<dbReference type="HOGENOM" id="CLU_042538_2_1_1"/>
<dbReference type="InParanoid" id="J9R393"/>
<dbReference type="OMA" id="DLIEYAM"/>
<dbReference type="OrthoDB" id="6486656at2759"/>
<dbReference type="Proteomes" id="UP000001514">
    <property type="component" value="Unassembled WGS sequence"/>
</dbReference>
<dbReference type="GO" id="GO:0010333">
    <property type="term" value="F:terpene synthase activity"/>
    <property type="evidence" value="ECO:0007669"/>
    <property type="project" value="InterPro"/>
</dbReference>
<dbReference type="GO" id="GO:0008299">
    <property type="term" value="P:isoprenoid biosynthetic process"/>
    <property type="evidence" value="ECO:0007669"/>
    <property type="project" value="UniProtKB-ARBA"/>
</dbReference>
<dbReference type="Gene3D" id="1.10.600.10">
    <property type="entry name" value="Farnesyl Diphosphate Synthase"/>
    <property type="match status" value="1"/>
</dbReference>
<dbReference type="InterPro" id="IPR008949">
    <property type="entry name" value="Isoprenoid_synthase_dom_sf"/>
</dbReference>
<dbReference type="InterPro" id="IPR034686">
    <property type="entry name" value="Terpene_cyclase-like_2"/>
</dbReference>
<dbReference type="PANTHER" id="PTHR35201:SF4">
    <property type="entry name" value="BETA-PINACENE SYNTHASE-RELATED"/>
    <property type="match status" value="1"/>
</dbReference>
<dbReference type="PANTHER" id="PTHR35201">
    <property type="entry name" value="TERPENE SYNTHASE"/>
    <property type="match status" value="1"/>
</dbReference>
<dbReference type="Pfam" id="PF19086">
    <property type="entry name" value="Terpene_syn_C_2"/>
    <property type="match status" value="1"/>
</dbReference>
<dbReference type="SUPFAM" id="SSF48576">
    <property type="entry name" value="Terpenoid synthases"/>
    <property type="match status" value="1"/>
</dbReference>
<name>MTS13_SELML</name>
<keyword id="KW-1185">Reference proteome</keyword>